<evidence type="ECO:0000255" key="1">
    <source>
        <dbReference type="HAMAP-Rule" id="MF_00864"/>
    </source>
</evidence>
<evidence type="ECO:0000269" key="2">
    <source>
    </source>
</evidence>
<evidence type="ECO:0000269" key="3">
    <source>
    </source>
</evidence>
<evidence type="ECO:0000269" key="4">
    <source ref="3"/>
</evidence>
<evidence type="ECO:0000303" key="5">
    <source>
    </source>
</evidence>
<evidence type="ECO:0000305" key="6">
    <source ref="3"/>
</evidence>
<evidence type="ECO:0000312" key="7">
    <source>
        <dbReference type="PDB" id="7OK0"/>
    </source>
</evidence>
<evidence type="ECO:0000312" key="8">
    <source>
        <dbReference type="PDB" id="7OQ4"/>
    </source>
</evidence>
<evidence type="ECO:0000312" key="9">
    <source>
        <dbReference type="PDB" id="7OQY"/>
    </source>
</evidence>
<evidence type="ECO:0007829" key="10">
    <source>
        <dbReference type="PDB" id="7OQ4"/>
    </source>
</evidence>
<evidence type="ECO:0007829" key="11">
    <source>
        <dbReference type="PDB" id="7OQY"/>
    </source>
</evidence>
<keyword id="KW-0002">3D-structure</keyword>
<keyword id="KW-0963">Cytoplasm</keyword>
<keyword id="KW-0240">DNA-directed RNA polymerase</keyword>
<keyword id="KW-0548">Nucleotidyltransferase</keyword>
<keyword id="KW-1185">Reference proteome</keyword>
<keyword id="KW-0804">Transcription</keyword>
<keyword id="KW-0808">Transferase</keyword>
<gene>
    <name evidence="1" type="primary">rpo4</name>
    <name evidence="1 5" type="synonym">rpoF</name>
    <name type="ordered locus">Saci_0625</name>
</gene>
<feature type="chain" id="PRO_0000453719" description="DNA-directed RNA polymerase subunit Rpo4">
    <location>
        <begin position="1"/>
        <end position="114"/>
    </location>
</feature>
<feature type="strand" evidence="10">
    <location>
        <begin position="6"/>
        <end position="9"/>
    </location>
</feature>
<feature type="strand" evidence="11">
    <location>
        <begin position="11"/>
        <end position="13"/>
    </location>
</feature>
<feature type="helix" evidence="11">
    <location>
        <begin position="15"/>
        <end position="29"/>
    </location>
</feature>
<feature type="helix" evidence="11">
    <location>
        <begin position="33"/>
        <end position="45"/>
    </location>
</feature>
<feature type="helix" evidence="11">
    <location>
        <begin position="50"/>
        <end position="59"/>
    </location>
</feature>
<feature type="turn" evidence="11">
    <location>
        <begin position="60"/>
        <end position="63"/>
    </location>
</feature>
<feature type="helix" evidence="11">
    <location>
        <begin position="67"/>
        <end position="76"/>
    </location>
</feature>
<feature type="turn" evidence="11">
    <location>
        <begin position="81"/>
        <end position="83"/>
    </location>
</feature>
<feature type="helix" evidence="11">
    <location>
        <begin position="84"/>
        <end position="87"/>
    </location>
</feature>
<feature type="helix" evidence="11">
    <location>
        <begin position="98"/>
        <end position="108"/>
    </location>
</feature>
<dbReference type="EC" id="2.7.7.6" evidence="1 4"/>
<dbReference type="EMBL" id="CP000077">
    <property type="protein sequence ID" value="AAY80017.1"/>
    <property type="molecule type" value="Genomic_DNA"/>
</dbReference>
<dbReference type="RefSeq" id="WP_011277519.1">
    <property type="nucleotide sequence ID" value="NC_007181.1"/>
</dbReference>
<dbReference type="PDB" id="7OK0">
    <property type="method" value="EM"/>
    <property type="resolution" value="2.90 A"/>
    <property type="chains" value="F=1-114"/>
</dbReference>
<dbReference type="PDB" id="7OQ4">
    <property type="method" value="EM"/>
    <property type="resolution" value="3.27 A"/>
    <property type="chains" value="F=1-114"/>
</dbReference>
<dbReference type="PDB" id="7OQY">
    <property type="method" value="EM"/>
    <property type="resolution" value="2.61 A"/>
    <property type="chains" value="F=1-114"/>
</dbReference>
<dbReference type="PDBsum" id="7OK0"/>
<dbReference type="PDBsum" id="7OQ4"/>
<dbReference type="PDBsum" id="7OQY"/>
<dbReference type="EMDB" id="EMD-12960"/>
<dbReference type="EMDB" id="EMD-13026"/>
<dbReference type="EMDB" id="EMD-13034"/>
<dbReference type="SMR" id="Q4JB12"/>
<dbReference type="STRING" id="330779.Saci_0625"/>
<dbReference type="GeneID" id="14551146"/>
<dbReference type="KEGG" id="sai:Saci_0625"/>
<dbReference type="PATRIC" id="fig|330779.12.peg.604"/>
<dbReference type="eggNOG" id="arCOG01016">
    <property type="taxonomic scope" value="Archaea"/>
</dbReference>
<dbReference type="HOGENOM" id="CLU_165894_0_0_2"/>
<dbReference type="Proteomes" id="UP000001018">
    <property type="component" value="Chromosome"/>
</dbReference>
<dbReference type="GO" id="GO:0005737">
    <property type="term" value="C:cytoplasm"/>
    <property type="evidence" value="ECO:0007669"/>
    <property type="project" value="UniProtKB-SubCell"/>
</dbReference>
<dbReference type="GO" id="GO:0000428">
    <property type="term" value="C:DNA-directed RNA polymerase complex"/>
    <property type="evidence" value="ECO:0000314"/>
    <property type="project" value="UniProtKB"/>
</dbReference>
<dbReference type="GO" id="GO:0003899">
    <property type="term" value="F:DNA-directed RNA polymerase activity"/>
    <property type="evidence" value="ECO:0000314"/>
    <property type="project" value="UniProtKB"/>
</dbReference>
<dbReference type="GO" id="GO:0000166">
    <property type="term" value="F:nucleotide binding"/>
    <property type="evidence" value="ECO:0007669"/>
    <property type="project" value="InterPro"/>
</dbReference>
<dbReference type="GO" id="GO:0006351">
    <property type="term" value="P:DNA-templated transcription"/>
    <property type="evidence" value="ECO:0000314"/>
    <property type="project" value="UniProtKB"/>
</dbReference>
<dbReference type="GO" id="GO:0006352">
    <property type="term" value="P:DNA-templated transcription initiation"/>
    <property type="evidence" value="ECO:0007669"/>
    <property type="project" value="InterPro"/>
</dbReference>
<dbReference type="Gene3D" id="6.10.140.930">
    <property type="match status" value="1"/>
</dbReference>
<dbReference type="Gene3D" id="1.10.150.80">
    <property type="entry name" value="HRDC domain"/>
    <property type="match status" value="1"/>
</dbReference>
<dbReference type="HAMAP" id="MF_00864">
    <property type="entry name" value="RNApol_arch_Rpo4"/>
    <property type="match status" value="1"/>
</dbReference>
<dbReference type="InterPro" id="IPR010997">
    <property type="entry name" value="HRDC-like_sf"/>
</dbReference>
<dbReference type="InterPro" id="IPR044876">
    <property type="entry name" value="HRDC_dom_sf"/>
</dbReference>
<dbReference type="InterPro" id="IPR005574">
    <property type="entry name" value="Rpb4/RPC9"/>
</dbReference>
<dbReference type="InterPro" id="IPR010924">
    <property type="entry name" value="Rpo4"/>
</dbReference>
<dbReference type="NCBIfam" id="NF011553">
    <property type="entry name" value="PRK14981.1-5"/>
    <property type="match status" value="1"/>
</dbReference>
<dbReference type="PANTHER" id="PTHR39646:SF1">
    <property type="entry name" value="DNA-DIRECTED RNA POLYMERASE SUBUNIT RPO4"/>
    <property type="match status" value="1"/>
</dbReference>
<dbReference type="PANTHER" id="PTHR39646">
    <property type="entry name" value="RNA POLYMERASE RPB4"/>
    <property type="match status" value="1"/>
</dbReference>
<dbReference type="Pfam" id="PF03874">
    <property type="entry name" value="RNA_pol_Rpb4"/>
    <property type="match status" value="1"/>
</dbReference>
<dbReference type="PIRSF" id="PIRSF005053">
    <property type="entry name" value="RNA_pol_F_arch"/>
    <property type="match status" value="1"/>
</dbReference>
<dbReference type="SUPFAM" id="SSF47819">
    <property type="entry name" value="HRDC-like"/>
    <property type="match status" value="1"/>
</dbReference>
<reference key="1">
    <citation type="journal article" date="2005" name="J. Bacteriol.">
        <title>The genome of Sulfolobus acidocaldarius, a model organism of the Crenarchaeota.</title>
        <authorList>
            <person name="Chen L."/>
            <person name="Bruegger K."/>
            <person name="Skovgaard M."/>
            <person name="Redder P."/>
            <person name="She Q."/>
            <person name="Torarinsson E."/>
            <person name="Greve B."/>
            <person name="Awayez M."/>
            <person name="Zibat A."/>
            <person name="Klenk H.-P."/>
            <person name="Garrett R.A."/>
        </authorList>
    </citation>
    <scope>NUCLEOTIDE SEQUENCE [LARGE SCALE GENOMIC DNA]</scope>
    <source>
        <strain>ATCC 33909 / DSM 639 / JCM 8929 / NBRC 15157 / NCIMB 11770</strain>
    </source>
</reference>
<reference key="2">
    <citation type="journal article" date="1992" name="Proc. Natl. Acad. Sci. U.S.A.">
        <title>Component H of the DNA-dependent RNA polymerases of Archaea is homologous to a subunit shared by the three eucaryal nuclear RNA polymerases.</title>
        <authorList>
            <person name="Klenk H.-P."/>
            <person name="Palm P."/>
            <person name="Lottspeich F."/>
            <person name="Zillig W."/>
        </authorList>
    </citation>
    <scope>SUBUNIT</scope>
    <source>
        <strain>ATCC 33909 / DSM 639 / JCM 8929 / NBRC 15157 / NCIMB 11770</strain>
    </source>
</reference>
<reference key="3">
    <citation type="journal article" date="1994" name="Syst. Appl. Microbiol.">
        <title>Structure and Function of the DNA-Dependent RNA Polymerase of Sulfolobus.</title>
        <authorList>
            <person name="Lanzendorfer M."/>
            <person name="Langer D."/>
            <person name="Hain J."/>
            <person name="Klenk H.-P."/>
            <person name="Holz I."/>
            <person name="Arnold-Ammer I."/>
            <person name="Zillig W."/>
        </authorList>
    </citation>
    <scope>FUNCTION</scope>
    <scope>CATALYTIC ACTIVITY</scope>
    <scope>SUBUNIT</scope>
    <scope>MULTIPLE FORMS</scope>
    <source>
        <strain>ATCC 33909 / DSM 639 / JCM 8929 / NBRC 15157 / NCIMB 11770</strain>
    </source>
</reference>
<reference evidence="7 8 9" key="4">
    <citation type="journal article" date="2021" name="Nat. Commun.">
        <title>Structural basis of RNA polymerase inhibition by viral and host factors.</title>
        <authorList>
            <person name="Pilotto S."/>
            <person name="Fouqueau T."/>
            <person name="Lukoyanova N."/>
            <person name="Sheppard C."/>
            <person name="Lucas-Staat S."/>
            <person name="Diaz-Santin L.M."/>
            <person name="Matelska D."/>
            <person name="Prangishvili D."/>
            <person name="Cheung A.C.M."/>
            <person name="Werner F."/>
        </authorList>
    </citation>
    <scope>STRUCTURE BY ELECTRON MICROSCOPY (2.61 ANGSTROMS) OF RNAP WITH AND WITHOUT INHIBITORS</scope>
    <scope>SUBUNIT</scope>
    <source>
        <strain>ATCC 33909 / DSM 639 / JCM 8929 / NBRC 15157 / NCIMB 11770</strain>
    </source>
</reference>
<comment type="function">
    <text evidence="4 6">DNA-dependent RNA polymerase catalyzes the transcription of DNA into RNA using the four ribonucleoside triphosphates as substrates. This subunit is less well bound than the others (Ref.3). Probably not involved in transcription initiation (Probable).</text>
</comment>
<comment type="catalytic activity">
    <reaction evidence="1 4">
        <text>RNA(n) + a ribonucleoside 5'-triphosphate = RNA(n+1) + diphosphate</text>
        <dbReference type="Rhea" id="RHEA:21248"/>
        <dbReference type="Rhea" id="RHEA-COMP:14527"/>
        <dbReference type="Rhea" id="RHEA-COMP:17342"/>
        <dbReference type="ChEBI" id="CHEBI:33019"/>
        <dbReference type="ChEBI" id="CHEBI:61557"/>
        <dbReference type="ChEBI" id="CHEBI:140395"/>
        <dbReference type="EC" id="2.7.7.6"/>
    </reaction>
</comment>
<comment type="subunit">
    <text evidence="2 3 4 7 8 9">Part of the 13-subunit RNA polymerase complex. Forms a stalk with Rpo7 that extends from the main structure.</text>
</comment>
<comment type="subcellular location">
    <subcellularLocation>
        <location evidence="1">Cytoplasm</location>
    </subcellularLocation>
</comment>
<comment type="PTM">
    <text evidence="4">In purified enzyme appears as 5 forms, each differing by about 200 Da of a covalently bound, negatively charged residue. Not glycosylated.</text>
</comment>
<comment type="similarity">
    <text evidence="1">Belongs to the eukaryotic RPB4 RNA polymerase subunit family.</text>
</comment>
<protein>
    <recommendedName>
        <fullName evidence="1">DNA-directed RNA polymerase subunit Rpo4</fullName>
        <ecNumber evidence="1 4">2.7.7.6</ecNumber>
    </recommendedName>
    <alternativeName>
        <fullName evidence="1">DNA-directed RNA polymerase subunit F</fullName>
    </alternativeName>
</protein>
<sequence length="114" mass="13055">MSYSLKTIEEHFVPYSIAKKYIKELIDTGSSSNLIQKTFDYLNSISRCDEDSASKIMKELEEIVKREDVRAVLASICPTTVEEVRSVLVIDPSTIYSTEQIQKIIEIIKKYVES</sequence>
<accession>Q4JB12</accession>
<proteinExistence type="evidence at protein level"/>
<organism>
    <name type="scientific">Sulfolobus acidocaldarius (strain ATCC 33909 / DSM 639 / JCM 8929 / NBRC 15157 / NCIMB 11770)</name>
    <dbReference type="NCBI Taxonomy" id="330779"/>
    <lineage>
        <taxon>Archaea</taxon>
        <taxon>Thermoproteota</taxon>
        <taxon>Thermoprotei</taxon>
        <taxon>Sulfolobales</taxon>
        <taxon>Sulfolobaceae</taxon>
        <taxon>Sulfolobus</taxon>
    </lineage>
</organism>
<name>RPO4_SULAC</name>